<feature type="chain" id="PRO_0000341126" description="D-alanine--D-alanine ligase">
    <location>
        <begin position="1"/>
        <end position="349"/>
    </location>
</feature>
<feature type="domain" description="ATP-grasp" evidence="2">
    <location>
        <begin position="140"/>
        <end position="345"/>
    </location>
</feature>
<feature type="binding site" evidence="2">
    <location>
        <begin position="169"/>
        <end position="224"/>
    </location>
    <ligand>
        <name>ATP</name>
        <dbReference type="ChEBI" id="CHEBI:30616"/>
    </ligand>
</feature>
<feature type="binding site" evidence="2">
    <location>
        <position position="300"/>
    </location>
    <ligand>
        <name>Mg(2+)</name>
        <dbReference type="ChEBI" id="CHEBI:18420"/>
        <label>1</label>
    </ligand>
</feature>
<feature type="binding site" evidence="2">
    <location>
        <position position="312"/>
    </location>
    <ligand>
        <name>Mg(2+)</name>
        <dbReference type="ChEBI" id="CHEBI:18420"/>
        <label>1</label>
    </ligand>
</feature>
<feature type="binding site" evidence="2">
    <location>
        <position position="312"/>
    </location>
    <ligand>
        <name>Mg(2+)</name>
        <dbReference type="ChEBI" id="CHEBI:18420"/>
        <label>2</label>
    </ligand>
</feature>
<feature type="binding site" evidence="2">
    <location>
        <position position="314"/>
    </location>
    <ligand>
        <name>Mg(2+)</name>
        <dbReference type="ChEBI" id="CHEBI:18420"/>
        <label>2</label>
    </ligand>
</feature>
<name>DDL_LEPBA</name>
<reference key="1">
    <citation type="journal article" date="2008" name="PLoS ONE">
        <title>Genome sequence of the saprophyte Leptospira biflexa provides insights into the evolution of Leptospira and the pathogenesis of leptospirosis.</title>
        <authorList>
            <person name="Picardeau M."/>
            <person name="Bulach D.M."/>
            <person name="Bouchier C."/>
            <person name="Zuerner R.L."/>
            <person name="Zidane N."/>
            <person name="Wilson P.J."/>
            <person name="Creno S."/>
            <person name="Kuczek E.S."/>
            <person name="Bommezzadri S."/>
            <person name="Davis J.C."/>
            <person name="McGrath A."/>
            <person name="Johnson M.J."/>
            <person name="Boursaux-Eude C."/>
            <person name="Seemann T."/>
            <person name="Rouy Z."/>
            <person name="Coppel R.L."/>
            <person name="Rood J.I."/>
            <person name="Lajus A."/>
            <person name="Davies J.K."/>
            <person name="Medigue C."/>
            <person name="Adler B."/>
        </authorList>
    </citation>
    <scope>NUCLEOTIDE SEQUENCE [LARGE SCALE GENOMIC DNA]</scope>
    <source>
        <strain>Patoc 1 / Ames</strain>
    </source>
</reference>
<organism>
    <name type="scientific">Leptospira biflexa serovar Patoc (strain Patoc 1 / Ames)</name>
    <dbReference type="NCBI Taxonomy" id="355278"/>
    <lineage>
        <taxon>Bacteria</taxon>
        <taxon>Pseudomonadati</taxon>
        <taxon>Spirochaetota</taxon>
        <taxon>Spirochaetia</taxon>
        <taxon>Leptospirales</taxon>
        <taxon>Leptospiraceae</taxon>
        <taxon>Leptospira</taxon>
    </lineage>
</organism>
<protein>
    <recommendedName>
        <fullName evidence="2">D-alanine--D-alanine ligase</fullName>
        <ecNumber evidence="2">6.3.2.4</ecNumber>
    </recommendedName>
    <alternativeName>
        <fullName evidence="2">D-Ala-D-Ala ligase</fullName>
    </alternativeName>
    <alternativeName>
        <fullName evidence="2">D-alanylalanine synthetase</fullName>
    </alternativeName>
</protein>
<proteinExistence type="inferred from homology"/>
<comment type="function">
    <text evidence="2">Cell wall formation.</text>
</comment>
<comment type="catalytic activity">
    <reaction evidence="2">
        <text>2 D-alanine + ATP = D-alanyl-D-alanine + ADP + phosphate + H(+)</text>
        <dbReference type="Rhea" id="RHEA:11224"/>
        <dbReference type="ChEBI" id="CHEBI:15378"/>
        <dbReference type="ChEBI" id="CHEBI:30616"/>
        <dbReference type="ChEBI" id="CHEBI:43474"/>
        <dbReference type="ChEBI" id="CHEBI:57416"/>
        <dbReference type="ChEBI" id="CHEBI:57822"/>
        <dbReference type="ChEBI" id="CHEBI:456216"/>
        <dbReference type="EC" id="6.3.2.4"/>
    </reaction>
</comment>
<comment type="cofactor">
    <cofactor evidence="1">
        <name>Mg(2+)</name>
        <dbReference type="ChEBI" id="CHEBI:18420"/>
    </cofactor>
    <cofactor evidence="1">
        <name>Mn(2+)</name>
        <dbReference type="ChEBI" id="CHEBI:29035"/>
    </cofactor>
    <text evidence="1">Binds 2 magnesium or manganese ions per subunit.</text>
</comment>
<comment type="pathway">
    <text evidence="2">Cell wall biogenesis; peptidoglycan biosynthesis.</text>
</comment>
<comment type="subcellular location">
    <subcellularLocation>
        <location evidence="2">Cytoplasm</location>
    </subcellularLocation>
</comment>
<comment type="similarity">
    <text evidence="2">Belongs to the D-alanine--D-alanine ligase family.</text>
</comment>
<accession>B0S9U5</accession>
<keyword id="KW-0067">ATP-binding</keyword>
<keyword id="KW-0133">Cell shape</keyword>
<keyword id="KW-0961">Cell wall biogenesis/degradation</keyword>
<keyword id="KW-0963">Cytoplasm</keyword>
<keyword id="KW-0436">Ligase</keyword>
<keyword id="KW-0460">Magnesium</keyword>
<keyword id="KW-0464">Manganese</keyword>
<keyword id="KW-0479">Metal-binding</keyword>
<keyword id="KW-0547">Nucleotide-binding</keyword>
<keyword id="KW-0573">Peptidoglycan synthesis</keyword>
<sequence length="349" mass="38026">MSKIKIALLFGGISGEHIISVRSSAFIFATIDREKYDVCPVYINPNGKFWIPTVSEPIYPDPSGKTEIEFLQEFNKANAIVSPSEPADISQMGFLSAFLGLHGGAGEDGRIQGFLDTLGIPHTGSGVLASSLAMDKYRANILFEAMGIPVAPFLELEKGKTDPRKTLLNLSFSYPVFIKPTLGGSSVNTGMAKTAEEAMTLVDKIFVTDDRVLVQKLVSGTEVSIGVLEKPEGKKRNPFPLVPTEIRPKSEFFDFEAKYTKGASEEITPAPVGDEVTKTLQEYTLRCHEILGCKGYSRTDFIISDGVPYVLETNTLPGMTGTSLIPQQAKALGINMKDVFTWLLEISLS</sequence>
<evidence type="ECO:0000250" key="1"/>
<evidence type="ECO:0000255" key="2">
    <source>
        <dbReference type="HAMAP-Rule" id="MF_00047"/>
    </source>
</evidence>
<dbReference type="EC" id="6.3.2.4" evidence="2"/>
<dbReference type="EMBL" id="CP000777">
    <property type="protein sequence ID" value="ABZ94315.1"/>
    <property type="molecule type" value="Genomic_DNA"/>
</dbReference>
<dbReference type="RefSeq" id="WP_012388845.1">
    <property type="nucleotide sequence ID" value="NC_010842.1"/>
</dbReference>
<dbReference type="SMR" id="B0S9U5"/>
<dbReference type="KEGG" id="lbf:LBF_1808"/>
<dbReference type="HOGENOM" id="CLU_039268_1_1_12"/>
<dbReference type="UniPathway" id="UPA00219"/>
<dbReference type="GO" id="GO:0005737">
    <property type="term" value="C:cytoplasm"/>
    <property type="evidence" value="ECO:0007669"/>
    <property type="project" value="UniProtKB-SubCell"/>
</dbReference>
<dbReference type="GO" id="GO:0005524">
    <property type="term" value="F:ATP binding"/>
    <property type="evidence" value="ECO:0007669"/>
    <property type="project" value="UniProtKB-KW"/>
</dbReference>
<dbReference type="GO" id="GO:0008716">
    <property type="term" value="F:D-alanine-D-alanine ligase activity"/>
    <property type="evidence" value="ECO:0007669"/>
    <property type="project" value="UniProtKB-UniRule"/>
</dbReference>
<dbReference type="GO" id="GO:0046872">
    <property type="term" value="F:metal ion binding"/>
    <property type="evidence" value="ECO:0007669"/>
    <property type="project" value="UniProtKB-KW"/>
</dbReference>
<dbReference type="GO" id="GO:0071555">
    <property type="term" value="P:cell wall organization"/>
    <property type="evidence" value="ECO:0007669"/>
    <property type="project" value="UniProtKB-KW"/>
</dbReference>
<dbReference type="GO" id="GO:0009252">
    <property type="term" value="P:peptidoglycan biosynthetic process"/>
    <property type="evidence" value="ECO:0007669"/>
    <property type="project" value="UniProtKB-UniRule"/>
</dbReference>
<dbReference type="GO" id="GO:0008360">
    <property type="term" value="P:regulation of cell shape"/>
    <property type="evidence" value="ECO:0007669"/>
    <property type="project" value="UniProtKB-KW"/>
</dbReference>
<dbReference type="Gene3D" id="3.40.50.20">
    <property type="match status" value="1"/>
</dbReference>
<dbReference type="Gene3D" id="3.30.1490.20">
    <property type="entry name" value="ATP-grasp fold, A domain"/>
    <property type="match status" value="1"/>
</dbReference>
<dbReference type="Gene3D" id="3.30.470.20">
    <property type="entry name" value="ATP-grasp fold, B domain"/>
    <property type="match status" value="1"/>
</dbReference>
<dbReference type="HAMAP" id="MF_00047">
    <property type="entry name" value="Dala_Dala_lig"/>
    <property type="match status" value="1"/>
</dbReference>
<dbReference type="InterPro" id="IPR011761">
    <property type="entry name" value="ATP-grasp"/>
</dbReference>
<dbReference type="InterPro" id="IPR013815">
    <property type="entry name" value="ATP_grasp_subdomain_1"/>
</dbReference>
<dbReference type="InterPro" id="IPR000291">
    <property type="entry name" value="D-Ala_lig_Van_CS"/>
</dbReference>
<dbReference type="InterPro" id="IPR005905">
    <property type="entry name" value="D_ala_D_ala"/>
</dbReference>
<dbReference type="InterPro" id="IPR011095">
    <property type="entry name" value="Dala_Dala_lig_C"/>
</dbReference>
<dbReference type="InterPro" id="IPR011127">
    <property type="entry name" value="Dala_Dala_lig_N"/>
</dbReference>
<dbReference type="InterPro" id="IPR016185">
    <property type="entry name" value="PreATP-grasp_dom_sf"/>
</dbReference>
<dbReference type="NCBIfam" id="TIGR01205">
    <property type="entry name" value="D_ala_D_alaTIGR"/>
    <property type="match status" value="1"/>
</dbReference>
<dbReference type="NCBIfam" id="NF002378">
    <property type="entry name" value="PRK01372.1"/>
    <property type="match status" value="1"/>
</dbReference>
<dbReference type="NCBIfam" id="NF011170">
    <property type="entry name" value="PRK14572.1"/>
    <property type="match status" value="1"/>
</dbReference>
<dbReference type="PANTHER" id="PTHR23132">
    <property type="entry name" value="D-ALANINE--D-ALANINE LIGASE"/>
    <property type="match status" value="1"/>
</dbReference>
<dbReference type="PANTHER" id="PTHR23132:SF23">
    <property type="entry name" value="D-ALANINE--D-ALANINE LIGASE B"/>
    <property type="match status" value="1"/>
</dbReference>
<dbReference type="Pfam" id="PF07478">
    <property type="entry name" value="Dala_Dala_lig_C"/>
    <property type="match status" value="1"/>
</dbReference>
<dbReference type="Pfam" id="PF01820">
    <property type="entry name" value="Dala_Dala_lig_N"/>
    <property type="match status" value="1"/>
</dbReference>
<dbReference type="PIRSF" id="PIRSF039102">
    <property type="entry name" value="Ddl/VanB"/>
    <property type="match status" value="1"/>
</dbReference>
<dbReference type="SUPFAM" id="SSF56059">
    <property type="entry name" value="Glutathione synthetase ATP-binding domain-like"/>
    <property type="match status" value="1"/>
</dbReference>
<dbReference type="SUPFAM" id="SSF52440">
    <property type="entry name" value="PreATP-grasp domain"/>
    <property type="match status" value="1"/>
</dbReference>
<dbReference type="PROSITE" id="PS50975">
    <property type="entry name" value="ATP_GRASP"/>
    <property type="match status" value="1"/>
</dbReference>
<dbReference type="PROSITE" id="PS00843">
    <property type="entry name" value="DALA_DALA_LIGASE_1"/>
    <property type="match status" value="1"/>
</dbReference>
<dbReference type="PROSITE" id="PS00844">
    <property type="entry name" value="DALA_DALA_LIGASE_2"/>
    <property type="match status" value="1"/>
</dbReference>
<gene>
    <name evidence="2" type="primary">ddl</name>
    <name type="ordered locus">LBF_1808</name>
</gene>